<name>HEM6_ENT38</name>
<accession>A4WD41</accession>
<reference key="1">
    <citation type="journal article" date="2010" name="PLoS Genet.">
        <title>Genome sequence of the plant growth promoting endophytic bacterium Enterobacter sp. 638.</title>
        <authorList>
            <person name="Taghavi S."/>
            <person name="van der Lelie D."/>
            <person name="Hoffman A."/>
            <person name="Zhang Y.B."/>
            <person name="Walla M.D."/>
            <person name="Vangronsveld J."/>
            <person name="Newman L."/>
            <person name="Monchy S."/>
        </authorList>
    </citation>
    <scope>NUCLEOTIDE SEQUENCE [LARGE SCALE GENOMIC DNA]</scope>
    <source>
        <strain>638</strain>
    </source>
</reference>
<protein>
    <recommendedName>
        <fullName evidence="1">Oxygen-dependent coproporphyrinogen-III oxidase</fullName>
        <shortName evidence="1">CPO</shortName>
        <shortName evidence="1">Coprogen oxidase</shortName>
        <shortName evidence="1">Coproporphyrinogenase</shortName>
        <ecNumber evidence="1">1.3.3.3</ecNumber>
    </recommendedName>
</protein>
<proteinExistence type="inferred from homology"/>
<evidence type="ECO:0000255" key="1">
    <source>
        <dbReference type="HAMAP-Rule" id="MF_00333"/>
    </source>
</evidence>
<comment type="function">
    <text evidence="1">Involved in the heme biosynthesis. Catalyzes the aerobic oxidative decarboxylation of propionate groups of rings A and B of coproporphyrinogen-III to yield the vinyl groups in protoporphyrinogen-IX.</text>
</comment>
<comment type="catalytic activity">
    <reaction evidence="1">
        <text>coproporphyrinogen III + O2 + 2 H(+) = protoporphyrinogen IX + 2 CO2 + 2 H2O</text>
        <dbReference type="Rhea" id="RHEA:18257"/>
        <dbReference type="ChEBI" id="CHEBI:15377"/>
        <dbReference type="ChEBI" id="CHEBI:15378"/>
        <dbReference type="ChEBI" id="CHEBI:15379"/>
        <dbReference type="ChEBI" id="CHEBI:16526"/>
        <dbReference type="ChEBI" id="CHEBI:57307"/>
        <dbReference type="ChEBI" id="CHEBI:57309"/>
        <dbReference type="EC" id="1.3.3.3"/>
    </reaction>
</comment>
<comment type="cofactor">
    <cofactor evidence="1">
        <name>a divalent metal cation</name>
        <dbReference type="ChEBI" id="CHEBI:60240"/>
    </cofactor>
</comment>
<comment type="pathway">
    <text evidence="1">Porphyrin-containing compound metabolism; protoporphyrin-IX biosynthesis; protoporphyrinogen-IX from coproporphyrinogen-III (O2 route): step 1/1.</text>
</comment>
<comment type="subunit">
    <text evidence="1">Homodimer.</text>
</comment>
<comment type="subcellular location">
    <subcellularLocation>
        <location evidence="1">Cytoplasm</location>
    </subcellularLocation>
</comment>
<comment type="similarity">
    <text evidence="1">Belongs to the aerobic coproporphyrinogen-III oxidase family.</text>
</comment>
<sequence length="299" mass="34258">MKPNVQQVKTFLMQLQDDICQKLSAVDGGEFHEDSWQREAGGGGRSRVLRNGGVFEQAGVNFSHVHGDAMPASATAHRPELAGRSFEAMGVSLVVHPQSPFVPTSHANVRFFIAEKPGADPVWWFGGGFDLTPYYGFEEDAVHWHRTARDICQPFGEEVYPKYKKWCDDYFYLKHRDEQRGIGGLFFDDLNAPDFDTAFNFMQAVGQGYTDAYLPIVERRRNTDYGVREREFQLYRRGRYVEFNLVWDRGTLFGLQTGGRTESILMSMPPLVRWEYSFEPKEGSPEAALAEFIKVRDWI</sequence>
<gene>
    <name evidence="1" type="primary">hemF</name>
    <name type="ordered locus">Ent638_2957</name>
</gene>
<organism>
    <name type="scientific">Enterobacter sp. (strain 638)</name>
    <dbReference type="NCBI Taxonomy" id="399742"/>
    <lineage>
        <taxon>Bacteria</taxon>
        <taxon>Pseudomonadati</taxon>
        <taxon>Pseudomonadota</taxon>
        <taxon>Gammaproteobacteria</taxon>
        <taxon>Enterobacterales</taxon>
        <taxon>Enterobacteriaceae</taxon>
        <taxon>Enterobacter</taxon>
    </lineage>
</organism>
<keyword id="KW-0963">Cytoplasm</keyword>
<keyword id="KW-0350">Heme biosynthesis</keyword>
<keyword id="KW-0479">Metal-binding</keyword>
<keyword id="KW-0560">Oxidoreductase</keyword>
<keyword id="KW-0627">Porphyrin biosynthesis</keyword>
<dbReference type="EC" id="1.3.3.3" evidence="1"/>
<dbReference type="EMBL" id="CP000653">
    <property type="protein sequence ID" value="ABP61621.1"/>
    <property type="molecule type" value="Genomic_DNA"/>
</dbReference>
<dbReference type="RefSeq" id="WP_015959953.1">
    <property type="nucleotide sequence ID" value="NC_009436.1"/>
</dbReference>
<dbReference type="SMR" id="A4WD41"/>
<dbReference type="STRING" id="399742.Ent638_2957"/>
<dbReference type="KEGG" id="ent:Ent638_2957"/>
<dbReference type="eggNOG" id="COG0408">
    <property type="taxonomic scope" value="Bacteria"/>
</dbReference>
<dbReference type="HOGENOM" id="CLU_026169_0_1_6"/>
<dbReference type="OrthoDB" id="9777553at2"/>
<dbReference type="UniPathway" id="UPA00251">
    <property type="reaction ID" value="UER00322"/>
</dbReference>
<dbReference type="Proteomes" id="UP000000230">
    <property type="component" value="Chromosome"/>
</dbReference>
<dbReference type="GO" id="GO:0005737">
    <property type="term" value="C:cytoplasm"/>
    <property type="evidence" value="ECO:0007669"/>
    <property type="project" value="UniProtKB-SubCell"/>
</dbReference>
<dbReference type="GO" id="GO:0004109">
    <property type="term" value="F:coproporphyrinogen oxidase activity"/>
    <property type="evidence" value="ECO:0007669"/>
    <property type="project" value="UniProtKB-UniRule"/>
</dbReference>
<dbReference type="GO" id="GO:0046872">
    <property type="term" value="F:metal ion binding"/>
    <property type="evidence" value="ECO:0007669"/>
    <property type="project" value="UniProtKB-KW"/>
</dbReference>
<dbReference type="GO" id="GO:0042803">
    <property type="term" value="F:protein homodimerization activity"/>
    <property type="evidence" value="ECO:0000250"/>
    <property type="project" value="UniProtKB"/>
</dbReference>
<dbReference type="GO" id="GO:0006782">
    <property type="term" value="P:protoporphyrinogen IX biosynthetic process"/>
    <property type="evidence" value="ECO:0007669"/>
    <property type="project" value="UniProtKB-UniRule"/>
</dbReference>
<dbReference type="FunFam" id="3.40.1500.10:FF:000001">
    <property type="entry name" value="Oxygen-dependent coproporphyrinogen-III oxidase"/>
    <property type="match status" value="1"/>
</dbReference>
<dbReference type="Gene3D" id="3.40.1500.10">
    <property type="entry name" value="Coproporphyrinogen III oxidase, aerobic"/>
    <property type="match status" value="1"/>
</dbReference>
<dbReference type="HAMAP" id="MF_00333">
    <property type="entry name" value="Coprogen_oxidas"/>
    <property type="match status" value="1"/>
</dbReference>
<dbReference type="InterPro" id="IPR001260">
    <property type="entry name" value="Coprogen_oxidase_aer"/>
</dbReference>
<dbReference type="InterPro" id="IPR036406">
    <property type="entry name" value="Coprogen_oxidase_aer_sf"/>
</dbReference>
<dbReference type="InterPro" id="IPR018375">
    <property type="entry name" value="Coprogen_oxidase_CS"/>
</dbReference>
<dbReference type="NCBIfam" id="NF003727">
    <property type="entry name" value="PRK05330.1"/>
    <property type="match status" value="1"/>
</dbReference>
<dbReference type="PANTHER" id="PTHR10755">
    <property type="entry name" value="COPROPORPHYRINOGEN III OXIDASE, MITOCHONDRIAL"/>
    <property type="match status" value="1"/>
</dbReference>
<dbReference type="PANTHER" id="PTHR10755:SF0">
    <property type="entry name" value="OXYGEN-DEPENDENT COPROPORPHYRINOGEN-III OXIDASE, MITOCHONDRIAL"/>
    <property type="match status" value="1"/>
</dbReference>
<dbReference type="Pfam" id="PF01218">
    <property type="entry name" value="Coprogen_oxidas"/>
    <property type="match status" value="1"/>
</dbReference>
<dbReference type="PIRSF" id="PIRSF000166">
    <property type="entry name" value="Coproporphyri_ox"/>
    <property type="match status" value="1"/>
</dbReference>
<dbReference type="PRINTS" id="PR00073">
    <property type="entry name" value="COPRGNOXDASE"/>
</dbReference>
<dbReference type="SUPFAM" id="SSF102886">
    <property type="entry name" value="Coproporphyrinogen III oxidase"/>
    <property type="match status" value="1"/>
</dbReference>
<dbReference type="PROSITE" id="PS01021">
    <property type="entry name" value="COPROGEN_OXIDASE"/>
    <property type="match status" value="1"/>
</dbReference>
<feature type="chain" id="PRO_1000059706" description="Oxygen-dependent coproporphyrinogen-III oxidase">
    <location>
        <begin position="1"/>
        <end position="299"/>
    </location>
</feature>
<feature type="region of interest" description="Important for dimerization" evidence="1">
    <location>
        <begin position="240"/>
        <end position="275"/>
    </location>
</feature>
<feature type="active site" description="Proton donor" evidence="1">
    <location>
        <position position="106"/>
    </location>
</feature>
<feature type="binding site" evidence="1">
    <location>
        <position position="92"/>
    </location>
    <ligand>
        <name>substrate</name>
    </ligand>
</feature>
<feature type="binding site" evidence="1">
    <location>
        <position position="96"/>
    </location>
    <ligand>
        <name>a divalent metal cation</name>
        <dbReference type="ChEBI" id="CHEBI:60240"/>
    </ligand>
</feature>
<feature type="binding site" evidence="1">
    <location>
        <position position="106"/>
    </location>
    <ligand>
        <name>a divalent metal cation</name>
        <dbReference type="ChEBI" id="CHEBI:60240"/>
    </ligand>
</feature>
<feature type="binding site" evidence="1">
    <location>
        <begin position="108"/>
        <end position="110"/>
    </location>
    <ligand>
        <name>substrate</name>
    </ligand>
</feature>
<feature type="binding site" evidence="1">
    <location>
        <position position="145"/>
    </location>
    <ligand>
        <name>a divalent metal cation</name>
        <dbReference type="ChEBI" id="CHEBI:60240"/>
    </ligand>
</feature>
<feature type="binding site" evidence="1">
    <location>
        <position position="175"/>
    </location>
    <ligand>
        <name>a divalent metal cation</name>
        <dbReference type="ChEBI" id="CHEBI:60240"/>
    </ligand>
</feature>
<feature type="binding site" evidence="1">
    <location>
        <begin position="258"/>
        <end position="260"/>
    </location>
    <ligand>
        <name>substrate</name>
    </ligand>
</feature>
<feature type="site" description="Important for dimerization" evidence="1">
    <location>
        <position position="175"/>
    </location>
</feature>